<keyword id="KW-0032">Aminotransferase</keyword>
<keyword id="KW-0496">Mitochondrion</keyword>
<keyword id="KW-1185">Reference proteome</keyword>
<keyword id="KW-0808">Transferase</keyword>
<keyword id="KW-0809">Transit peptide</keyword>
<evidence type="ECO:0000250" key="1"/>
<evidence type="ECO:0000255" key="2"/>
<evidence type="ECO:0000269" key="3">
    <source>
    </source>
</evidence>
<evidence type="ECO:0000305" key="4"/>
<accession>P48015</accession>
<accession>D6VS05</accession>
<name>GCST_YEAST</name>
<gene>
    <name type="primary">GCV1</name>
    <name type="ordered locus">YDR019C</name>
    <name type="ORF">YD9335.05C</name>
</gene>
<organism>
    <name type="scientific">Saccharomyces cerevisiae (strain ATCC 204508 / S288c)</name>
    <name type="common">Baker's yeast</name>
    <dbReference type="NCBI Taxonomy" id="559292"/>
    <lineage>
        <taxon>Eukaryota</taxon>
        <taxon>Fungi</taxon>
        <taxon>Dikarya</taxon>
        <taxon>Ascomycota</taxon>
        <taxon>Saccharomycotina</taxon>
        <taxon>Saccharomycetes</taxon>
        <taxon>Saccharomycetales</taxon>
        <taxon>Saccharomycetaceae</taxon>
        <taxon>Saccharomyces</taxon>
    </lineage>
</organism>
<sequence length="400" mass="44469">MSIIKKIVFKRFNSTLKKTALHDLHVSLGGTMVPYAGYSMPVLYKGQTHIESHNWTRTNAGLFDVSHMLQSKLSGPHSVKFLQRVTPTDFNALPVGSGTLSVLLNPQGGVVDDTIITKENDDNEFYIVTNAGCAERDTEFFHDELQNGSTLDCQWKIIEGRSLLALQGPKAKDVLEPLLSKTAPGKDLKELFFGQRHEFALKDGSLVQIARGGYTGEDGFEISIANEKAVEFAEQLLANPVMKPIGLAARDSLRLEAGMCLYGHELDESITPVEAALNWVISKSRRDLVDQKYWFNGYAKIMDQLNNKTYSKVRVGFKYLKKGPAARNGVKIFLPDAETEVGLVTSGSASPTLNNINIGQAYVQKGYHKKGTKLLVQVRNKFYPIELAKMPLVPTHYYKQ</sequence>
<comment type="function">
    <text>The glycine cleavage system (glycine decarboxylase complex) catalyzes the degradation of glycine.</text>
</comment>
<comment type="catalytic activity">
    <reaction>
        <text>N(6)-[(R)-S(8)-aminomethyldihydrolipoyl]-L-lysyl-[protein] + (6S)-5,6,7,8-tetrahydrofolate = N(6)-[(R)-dihydrolipoyl]-L-lysyl-[protein] + (6R)-5,10-methylene-5,6,7,8-tetrahydrofolate + NH4(+)</text>
        <dbReference type="Rhea" id="RHEA:16945"/>
        <dbReference type="Rhea" id="RHEA-COMP:10475"/>
        <dbReference type="Rhea" id="RHEA-COMP:10492"/>
        <dbReference type="ChEBI" id="CHEBI:15636"/>
        <dbReference type="ChEBI" id="CHEBI:28938"/>
        <dbReference type="ChEBI" id="CHEBI:57453"/>
        <dbReference type="ChEBI" id="CHEBI:83100"/>
        <dbReference type="ChEBI" id="CHEBI:83143"/>
        <dbReference type="EC" id="2.1.2.10"/>
    </reaction>
</comment>
<comment type="subunit">
    <text>Component of the glycine decarboxylase complex (GDC), which is composed of four proteins: P, T, L and H.</text>
</comment>
<comment type="subcellular location">
    <subcellularLocation>
        <location>Mitochondrion</location>
    </subcellularLocation>
</comment>
<comment type="miscellaneous">
    <text evidence="3">Present with 4090 molecules/cell in log phase SD medium.</text>
</comment>
<comment type="similarity">
    <text evidence="4">Belongs to the GcvT family.</text>
</comment>
<protein>
    <recommendedName>
        <fullName>Aminomethyltransferase, mitochondrial</fullName>
        <ecNumber>2.1.2.10</ecNumber>
    </recommendedName>
    <alternativeName>
        <fullName>Glycine cleavage system T protein</fullName>
        <shortName>GCVT</shortName>
    </alternativeName>
    <alternativeName>
        <fullName>Glycine decarboxylase complex subunit T</fullName>
    </alternativeName>
</protein>
<dbReference type="EC" id="2.1.2.10"/>
<dbReference type="EMBL" id="L41522">
    <property type="protein sequence ID" value="AAB05000.1"/>
    <property type="molecule type" value="Genomic_DNA"/>
</dbReference>
<dbReference type="EMBL" id="X95966">
    <property type="protein sequence ID" value="CAA65211.1"/>
    <property type="molecule type" value="Genomic_DNA"/>
</dbReference>
<dbReference type="EMBL" id="Z49770">
    <property type="protein sequence ID" value="CAA89844.1"/>
    <property type="molecule type" value="Genomic_DNA"/>
</dbReference>
<dbReference type="EMBL" id="Z74315">
    <property type="protein sequence ID" value="CAA98840.1"/>
    <property type="molecule type" value="Genomic_DNA"/>
</dbReference>
<dbReference type="EMBL" id="BK006938">
    <property type="protein sequence ID" value="DAA11865.1"/>
    <property type="molecule type" value="Genomic_DNA"/>
</dbReference>
<dbReference type="PIR" id="S54642">
    <property type="entry name" value="S54642"/>
</dbReference>
<dbReference type="RefSeq" id="NP_010302.1">
    <property type="nucleotide sequence ID" value="NM_001180327.1"/>
</dbReference>
<dbReference type="SMR" id="P48015"/>
<dbReference type="BioGRID" id="32069">
    <property type="interactions" value="206"/>
</dbReference>
<dbReference type="ComplexPortal" id="CPX-1268">
    <property type="entry name" value="Glycine decarboxylase multienzyme complex"/>
</dbReference>
<dbReference type="FunCoup" id="P48015">
    <property type="interactions" value="1545"/>
</dbReference>
<dbReference type="IntAct" id="P48015">
    <property type="interactions" value="8"/>
</dbReference>
<dbReference type="STRING" id="4932.YDR019C"/>
<dbReference type="iPTMnet" id="P48015"/>
<dbReference type="PaxDb" id="4932-YDR019C"/>
<dbReference type="PeptideAtlas" id="P48015"/>
<dbReference type="EnsemblFungi" id="YDR019C_mRNA">
    <property type="protein sequence ID" value="YDR019C"/>
    <property type="gene ID" value="YDR019C"/>
</dbReference>
<dbReference type="GeneID" id="851582"/>
<dbReference type="KEGG" id="sce:YDR019C"/>
<dbReference type="AGR" id="SGD:S000002426"/>
<dbReference type="SGD" id="S000002426">
    <property type="gene designation" value="GCV1"/>
</dbReference>
<dbReference type="VEuPathDB" id="FungiDB:YDR019C"/>
<dbReference type="eggNOG" id="KOG2770">
    <property type="taxonomic scope" value="Eukaryota"/>
</dbReference>
<dbReference type="GeneTree" id="ENSGT00940000157524"/>
<dbReference type="HOGENOM" id="CLU_007884_10_0_1"/>
<dbReference type="InParanoid" id="P48015"/>
<dbReference type="OMA" id="MPVQYPA"/>
<dbReference type="OrthoDB" id="10263536at2759"/>
<dbReference type="BioCyc" id="YEAST:YDR019C-MONOMER"/>
<dbReference type="Reactome" id="R-SCE-6783984">
    <property type="pathway name" value="Glycine degradation"/>
</dbReference>
<dbReference type="BioGRID-ORCS" id="851582">
    <property type="hits" value="3 hits in 10 CRISPR screens"/>
</dbReference>
<dbReference type="PRO" id="PR:P48015"/>
<dbReference type="Proteomes" id="UP000002311">
    <property type="component" value="Chromosome IV"/>
</dbReference>
<dbReference type="RNAct" id="P48015">
    <property type="molecule type" value="protein"/>
</dbReference>
<dbReference type="GO" id="GO:0005960">
    <property type="term" value="C:glycine cleavage complex"/>
    <property type="evidence" value="ECO:0000315"/>
    <property type="project" value="SGD"/>
</dbReference>
<dbReference type="GO" id="GO:0005739">
    <property type="term" value="C:mitochondrion"/>
    <property type="evidence" value="ECO:0007005"/>
    <property type="project" value="SGD"/>
</dbReference>
<dbReference type="GO" id="GO:0004047">
    <property type="term" value="F:aminomethyltransferase activity"/>
    <property type="evidence" value="ECO:0007669"/>
    <property type="project" value="UniProtKB-EC"/>
</dbReference>
<dbReference type="GO" id="GO:0008483">
    <property type="term" value="F:transaminase activity"/>
    <property type="evidence" value="ECO:0007669"/>
    <property type="project" value="UniProtKB-KW"/>
</dbReference>
<dbReference type="GO" id="GO:0006546">
    <property type="term" value="P:glycine catabolic process"/>
    <property type="evidence" value="ECO:0000303"/>
    <property type="project" value="ComplexPortal"/>
</dbReference>
<dbReference type="GO" id="GO:0006544">
    <property type="term" value="P:glycine metabolic process"/>
    <property type="evidence" value="ECO:0000315"/>
    <property type="project" value="SGD"/>
</dbReference>
<dbReference type="GO" id="GO:0006730">
    <property type="term" value="P:one-carbon metabolic process"/>
    <property type="evidence" value="ECO:0000315"/>
    <property type="project" value="SGD"/>
</dbReference>
<dbReference type="FunFam" id="3.30.70.1400:FF:000001">
    <property type="entry name" value="Aminomethyltransferase"/>
    <property type="match status" value="1"/>
</dbReference>
<dbReference type="Gene3D" id="2.40.30.110">
    <property type="entry name" value="Aminomethyltransferase beta-barrel domains"/>
    <property type="match status" value="1"/>
</dbReference>
<dbReference type="Gene3D" id="3.30.70.1400">
    <property type="entry name" value="Aminomethyltransferase beta-barrel domains"/>
    <property type="match status" value="1"/>
</dbReference>
<dbReference type="Gene3D" id="4.10.1250.10">
    <property type="entry name" value="Aminomethyltransferase fragment"/>
    <property type="match status" value="1"/>
</dbReference>
<dbReference type="Gene3D" id="3.30.1360.120">
    <property type="entry name" value="Probable tRNA modification gtpase trme, domain 1"/>
    <property type="match status" value="1"/>
</dbReference>
<dbReference type="InterPro" id="IPR006223">
    <property type="entry name" value="GCS_T"/>
</dbReference>
<dbReference type="InterPro" id="IPR013977">
    <property type="entry name" value="GCST_C"/>
</dbReference>
<dbReference type="InterPro" id="IPR006222">
    <property type="entry name" value="GCV_T_N"/>
</dbReference>
<dbReference type="InterPro" id="IPR028896">
    <property type="entry name" value="GcvT/YgfZ/DmdA"/>
</dbReference>
<dbReference type="InterPro" id="IPR029043">
    <property type="entry name" value="GcvT/YgfZ_C"/>
</dbReference>
<dbReference type="InterPro" id="IPR027266">
    <property type="entry name" value="TrmE/GcvT_dom1"/>
</dbReference>
<dbReference type="NCBIfam" id="TIGR00528">
    <property type="entry name" value="gcvT"/>
    <property type="match status" value="1"/>
</dbReference>
<dbReference type="NCBIfam" id="NF001567">
    <property type="entry name" value="PRK00389.1"/>
    <property type="match status" value="1"/>
</dbReference>
<dbReference type="PANTHER" id="PTHR43757">
    <property type="entry name" value="AMINOMETHYLTRANSFERASE"/>
    <property type="match status" value="1"/>
</dbReference>
<dbReference type="PANTHER" id="PTHR43757:SF2">
    <property type="entry name" value="AMINOMETHYLTRANSFERASE, MITOCHONDRIAL"/>
    <property type="match status" value="1"/>
</dbReference>
<dbReference type="Pfam" id="PF01571">
    <property type="entry name" value="GCV_T"/>
    <property type="match status" value="1"/>
</dbReference>
<dbReference type="Pfam" id="PF08669">
    <property type="entry name" value="GCV_T_C"/>
    <property type="match status" value="1"/>
</dbReference>
<dbReference type="PIRSF" id="PIRSF006487">
    <property type="entry name" value="GcvT"/>
    <property type="match status" value="1"/>
</dbReference>
<dbReference type="SUPFAM" id="SSF101790">
    <property type="entry name" value="Aminomethyltransferase beta-barrel domain"/>
    <property type="match status" value="1"/>
</dbReference>
<dbReference type="SUPFAM" id="SSF103025">
    <property type="entry name" value="Folate-binding domain"/>
    <property type="match status" value="1"/>
</dbReference>
<reference key="1">
    <citation type="journal article" date="1997" name="Gene">
        <title>Cloning, and molecular characterization of the GCV1 gene encoding the glycine cleavage T-protein from Saccharomyces cerevisiae.</title>
        <authorList>
            <person name="McNeil J.B."/>
            <person name="Zhang F.R."/>
            <person name="Taylor B.V."/>
            <person name="Pearlman R.E."/>
            <person name="Bognar A.L."/>
        </authorList>
    </citation>
    <scope>NUCLEOTIDE SEQUENCE [GENOMIC DNA]</scope>
</reference>
<reference key="2">
    <citation type="journal article" date="1996" name="Yeast">
        <title>Sequencing and analysis of a 35.4 kb region on the right arm of chromosome IV from Saccharomyces cerevisiae reveal 23 open reading frames.</title>
        <authorList>
            <person name="Eide L.G."/>
            <person name="Sander C."/>
            <person name="Prydz H."/>
        </authorList>
    </citation>
    <scope>NUCLEOTIDE SEQUENCE [GENOMIC DNA]</scope>
</reference>
<reference key="3">
    <citation type="journal article" date="1997" name="Nature">
        <title>The nucleotide sequence of Saccharomyces cerevisiae chromosome IV.</title>
        <authorList>
            <person name="Jacq C."/>
            <person name="Alt-Moerbe J."/>
            <person name="Andre B."/>
            <person name="Arnold W."/>
            <person name="Bahr A."/>
            <person name="Ballesta J.P.G."/>
            <person name="Bargues M."/>
            <person name="Baron L."/>
            <person name="Becker A."/>
            <person name="Biteau N."/>
            <person name="Bloecker H."/>
            <person name="Blugeon C."/>
            <person name="Boskovic J."/>
            <person name="Brandt P."/>
            <person name="Brueckner M."/>
            <person name="Buitrago M.J."/>
            <person name="Coster F."/>
            <person name="Delaveau T."/>
            <person name="del Rey F."/>
            <person name="Dujon B."/>
            <person name="Eide L.G."/>
            <person name="Garcia-Cantalejo J.M."/>
            <person name="Goffeau A."/>
            <person name="Gomez-Peris A."/>
            <person name="Granotier C."/>
            <person name="Hanemann V."/>
            <person name="Hankeln T."/>
            <person name="Hoheisel J.D."/>
            <person name="Jaeger W."/>
            <person name="Jimenez A."/>
            <person name="Jonniaux J.-L."/>
            <person name="Kraemer C."/>
            <person name="Kuester H."/>
            <person name="Laamanen P."/>
            <person name="Legros Y."/>
            <person name="Louis E.J."/>
            <person name="Moeller-Rieker S."/>
            <person name="Monnet A."/>
            <person name="Moro M."/>
            <person name="Mueller-Auer S."/>
            <person name="Nussbaumer B."/>
            <person name="Paricio N."/>
            <person name="Paulin L."/>
            <person name="Perea J."/>
            <person name="Perez-Alonso M."/>
            <person name="Perez-Ortin J.E."/>
            <person name="Pohl T.M."/>
            <person name="Prydz H."/>
            <person name="Purnelle B."/>
            <person name="Rasmussen S.W."/>
            <person name="Remacha M.A."/>
            <person name="Revuelta J.L."/>
            <person name="Rieger M."/>
            <person name="Salom D."/>
            <person name="Saluz H.P."/>
            <person name="Saiz J.E."/>
            <person name="Saren A.-M."/>
            <person name="Schaefer M."/>
            <person name="Scharfe M."/>
            <person name="Schmidt E.R."/>
            <person name="Schneider C."/>
            <person name="Scholler P."/>
            <person name="Schwarz S."/>
            <person name="Soler-Mira A."/>
            <person name="Urrestarazu L.A."/>
            <person name="Verhasselt P."/>
            <person name="Vissers S."/>
            <person name="Voet M."/>
            <person name="Volckaert G."/>
            <person name="Wagner G."/>
            <person name="Wambutt R."/>
            <person name="Wedler E."/>
            <person name="Wedler H."/>
            <person name="Woelfl S."/>
            <person name="Harris D.E."/>
            <person name="Bowman S."/>
            <person name="Brown D."/>
            <person name="Churcher C.M."/>
            <person name="Connor R."/>
            <person name="Dedman K."/>
            <person name="Gentles S."/>
            <person name="Hamlin N."/>
            <person name="Hunt S."/>
            <person name="Jones L."/>
            <person name="McDonald S."/>
            <person name="Murphy L.D."/>
            <person name="Niblett D."/>
            <person name="Odell C."/>
            <person name="Oliver K."/>
            <person name="Rajandream M.A."/>
            <person name="Richards C."/>
            <person name="Shore L."/>
            <person name="Walsh S.V."/>
            <person name="Barrell B.G."/>
            <person name="Dietrich F.S."/>
            <person name="Mulligan J.T."/>
            <person name="Allen E."/>
            <person name="Araujo R."/>
            <person name="Aviles E."/>
            <person name="Berno A."/>
            <person name="Carpenter J."/>
            <person name="Chen E."/>
            <person name="Cherry J.M."/>
            <person name="Chung E."/>
            <person name="Duncan M."/>
            <person name="Hunicke-Smith S."/>
            <person name="Hyman R.W."/>
            <person name="Komp C."/>
            <person name="Lashkari D."/>
            <person name="Lew H."/>
            <person name="Lin D."/>
            <person name="Mosedale D."/>
            <person name="Nakahara K."/>
            <person name="Namath A."/>
            <person name="Oefner P."/>
            <person name="Oh C."/>
            <person name="Petel F.X."/>
            <person name="Roberts D."/>
            <person name="Schramm S."/>
            <person name="Schroeder M."/>
            <person name="Shogren T."/>
            <person name="Shroff N."/>
            <person name="Winant A."/>
            <person name="Yelton M.A."/>
            <person name="Botstein D."/>
            <person name="Davis R.W."/>
            <person name="Johnston M."/>
            <person name="Andrews S."/>
            <person name="Brinkman R."/>
            <person name="Cooper J."/>
            <person name="Ding H."/>
            <person name="Du Z."/>
            <person name="Favello A."/>
            <person name="Fulton L."/>
            <person name="Gattung S."/>
            <person name="Greco T."/>
            <person name="Hallsworth K."/>
            <person name="Hawkins J."/>
            <person name="Hillier L.W."/>
            <person name="Jier M."/>
            <person name="Johnson D."/>
            <person name="Johnston L."/>
            <person name="Kirsten J."/>
            <person name="Kucaba T."/>
            <person name="Langston Y."/>
            <person name="Latreille P."/>
            <person name="Le T."/>
            <person name="Mardis E."/>
            <person name="Menezes S."/>
            <person name="Miller N."/>
            <person name="Nhan M."/>
            <person name="Pauley A."/>
            <person name="Peluso D."/>
            <person name="Rifkin L."/>
            <person name="Riles L."/>
            <person name="Taich A."/>
            <person name="Trevaskis E."/>
            <person name="Vignati D."/>
            <person name="Wilcox L."/>
            <person name="Wohldman P."/>
            <person name="Vaudin M."/>
            <person name="Wilson R."/>
            <person name="Waterston R."/>
            <person name="Albermann K."/>
            <person name="Hani J."/>
            <person name="Heumann K."/>
            <person name="Kleine K."/>
            <person name="Mewes H.-W."/>
            <person name="Zollner A."/>
            <person name="Zaccaria P."/>
        </authorList>
    </citation>
    <scope>NUCLEOTIDE SEQUENCE [LARGE SCALE GENOMIC DNA]</scope>
    <source>
        <strain>ATCC 204508 / S288c</strain>
    </source>
</reference>
<reference key="4">
    <citation type="journal article" date="2014" name="G3 (Bethesda)">
        <title>The reference genome sequence of Saccharomyces cerevisiae: Then and now.</title>
        <authorList>
            <person name="Engel S.R."/>
            <person name="Dietrich F.S."/>
            <person name="Fisk D.G."/>
            <person name="Binkley G."/>
            <person name="Balakrishnan R."/>
            <person name="Costanzo M.C."/>
            <person name="Dwight S.S."/>
            <person name="Hitz B.C."/>
            <person name="Karra K."/>
            <person name="Nash R.S."/>
            <person name="Weng S."/>
            <person name="Wong E.D."/>
            <person name="Lloyd P."/>
            <person name="Skrzypek M.S."/>
            <person name="Miyasato S.R."/>
            <person name="Simison M."/>
            <person name="Cherry J.M."/>
        </authorList>
    </citation>
    <scope>GENOME REANNOTATION</scope>
    <source>
        <strain>ATCC 204508 / S288c</strain>
    </source>
</reference>
<reference key="5">
    <citation type="journal article" date="2003" name="Nature">
        <title>Global analysis of protein expression in yeast.</title>
        <authorList>
            <person name="Ghaemmaghami S."/>
            <person name="Huh W.-K."/>
            <person name="Bower K."/>
            <person name="Howson R.W."/>
            <person name="Belle A."/>
            <person name="Dephoure N."/>
            <person name="O'Shea E.K."/>
            <person name="Weissman J.S."/>
        </authorList>
    </citation>
    <scope>LEVEL OF PROTEIN EXPRESSION [LARGE SCALE ANALYSIS]</scope>
</reference>
<proteinExistence type="evidence at protein level"/>
<feature type="transit peptide" description="Mitochondrion" evidence="2">
    <location>
        <begin position="1"/>
        <end status="unknown"/>
    </location>
</feature>
<feature type="chain" id="PRO_0000010766" description="Aminomethyltransferase, mitochondrial">
    <location>
        <begin status="unknown"/>
        <end position="400"/>
    </location>
</feature>
<feature type="binding site" evidence="1">
    <location>
        <position position="221"/>
    </location>
    <ligand>
        <name>substrate</name>
    </ligand>
</feature>
<feature type="binding site" evidence="1">
    <location>
        <position position="250"/>
    </location>
    <ligand>
        <name>substrate</name>
    </ligand>
</feature>
<feature type="binding site" evidence="1">
    <location>
        <position position="397"/>
    </location>
    <ligand>
        <name>substrate</name>
    </ligand>
</feature>
<feature type="sequence conflict" description="In Ref. 1; AAB05000." evidence="4" ref="1">
    <original>D</original>
    <variation>E</variation>
    <location>
        <position position="122"/>
    </location>
</feature>